<accession>Q9C7P6</accession>
<name>IF4E3_ARATH</name>
<reference key="1">
    <citation type="journal article" date="2000" name="Nature">
        <title>Sequence and analysis of chromosome 1 of the plant Arabidopsis thaliana.</title>
        <authorList>
            <person name="Theologis A."/>
            <person name="Ecker J.R."/>
            <person name="Palm C.J."/>
            <person name="Federspiel N.A."/>
            <person name="Kaul S."/>
            <person name="White O."/>
            <person name="Alonso J."/>
            <person name="Altafi H."/>
            <person name="Araujo R."/>
            <person name="Bowman C.L."/>
            <person name="Brooks S.Y."/>
            <person name="Buehler E."/>
            <person name="Chan A."/>
            <person name="Chao Q."/>
            <person name="Chen H."/>
            <person name="Cheuk R.F."/>
            <person name="Chin C.W."/>
            <person name="Chung M.K."/>
            <person name="Conn L."/>
            <person name="Conway A.B."/>
            <person name="Conway A.R."/>
            <person name="Creasy T.H."/>
            <person name="Dewar K."/>
            <person name="Dunn P."/>
            <person name="Etgu P."/>
            <person name="Feldblyum T.V."/>
            <person name="Feng J.-D."/>
            <person name="Fong B."/>
            <person name="Fujii C.Y."/>
            <person name="Gill J.E."/>
            <person name="Goldsmith A.D."/>
            <person name="Haas B."/>
            <person name="Hansen N.F."/>
            <person name="Hughes B."/>
            <person name="Huizar L."/>
            <person name="Hunter J.L."/>
            <person name="Jenkins J."/>
            <person name="Johnson-Hopson C."/>
            <person name="Khan S."/>
            <person name="Khaykin E."/>
            <person name="Kim C.J."/>
            <person name="Koo H.L."/>
            <person name="Kremenetskaia I."/>
            <person name="Kurtz D.B."/>
            <person name="Kwan A."/>
            <person name="Lam B."/>
            <person name="Langin-Hooper S."/>
            <person name="Lee A."/>
            <person name="Lee J.M."/>
            <person name="Lenz C.A."/>
            <person name="Li J.H."/>
            <person name="Li Y.-P."/>
            <person name="Lin X."/>
            <person name="Liu S.X."/>
            <person name="Liu Z.A."/>
            <person name="Luros J.S."/>
            <person name="Maiti R."/>
            <person name="Marziali A."/>
            <person name="Militscher J."/>
            <person name="Miranda M."/>
            <person name="Nguyen M."/>
            <person name="Nierman W.C."/>
            <person name="Osborne B.I."/>
            <person name="Pai G."/>
            <person name="Peterson J."/>
            <person name="Pham P.K."/>
            <person name="Rizzo M."/>
            <person name="Rooney T."/>
            <person name="Rowley D."/>
            <person name="Sakano H."/>
            <person name="Salzberg S.L."/>
            <person name="Schwartz J.R."/>
            <person name="Shinn P."/>
            <person name="Southwick A.M."/>
            <person name="Sun H."/>
            <person name="Tallon L.J."/>
            <person name="Tambunga G."/>
            <person name="Toriumi M.J."/>
            <person name="Town C.D."/>
            <person name="Utterback T."/>
            <person name="Van Aken S."/>
            <person name="Vaysberg M."/>
            <person name="Vysotskaia V.S."/>
            <person name="Walker M."/>
            <person name="Wu D."/>
            <person name="Yu G."/>
            <person name="Fraser C.M."/>
            <person name="Venter J.C."/>
            <person name="Davis R.W."/>
        </authorList>
    </citation>
    <scope>NUCLEOTIDE SEQUENCE [LARGE SCALE GENOMIC DNA]</scope>
    <source>
        <strain>cv. Columbia</strain>
    </source>
</reference>
<reference key="2">
    <citation type="journal article" date="2017" name="Plant J.">
        <title>Araport11: a complete reannotation of the Arabidopsis thaliana reference genome.</title>
        <authorList>
            <person name="Cheng C.Y."/>
            <person name="Krishnakumar V."/>
            <person name="Chan A.P."/>
            <person name="Thibaud-Nissen F."/>
            <person name="Schobel S."/>
            <person name="Town C.D."/>
        </authorList>
    </citation>
    <scope>GENOME REANNOTATION</scope>
    <source>
        <strain>cv. Columbia</strain>
    </source>
</reference>
<reference key="3">
    <citation type="journal article" date="2006" name="Trends Plant Sci.">
        <title>Translation initiation factors: a weak link in plant RNA virus infection.</title>
        <authorList>
            <person name="Robaglia C."/>
            <person name="Caranta C."/>
        </authorList>
    </citation>
    <scope>REVIEW</scope>
    <scope>SUBUNIT</scope>
</reference>
<organism>
    <name type="scientific">Arabidopsis thaliana</name>
    <name type="common">Mouse-ear cress</name>
    <dbReference type="NCBI Taxonomy" id="3702"/>
    <lineage>
        <taxon>Eukaryota</taxon>
        <taxon>Viridiplantae</taxon>
        <taxon>Streptophyta</taxon>
        <taxon>Embryophyta</taxon>
        <taxon>Tracheophyta</taxon>
        <taxon>Spermatophyta</taxon>
        <taxon>Magnoliopsida</taxon>
        <taxon>eudicotyledons</taxon>
        <taxon>Gunneridae</taxon>
        <taxon>Pentapetalae</taxon>
        <taxon>rosids</taxon>
        <taxon>malvids</taxon>
        <taxon>Brassicales</taxon>
        <taxon>Brassicaceae</taxon>
        <taxon>Camelineae</taxon>
        <taxon>Arabidopsis</taxon>
    </lineage>
</organism>
<evidence type="ECO:0000250" key="1">
    <source>
        <dbReference type="UniProtKB" id="K0P2S0"/>
    </source>
</evidence>
<evidence type="ECO:0000250" key="2">
    <source>
        <dbReference type="UniProtKB" id="P29557"/>
    </source>
</evidence>
<evidence type="ECO:0000250" key="3">
    <source>
        <dbReference type="UniProtKB" id="P48599"/>
    </source>
</evidence>
<evidence type="ECO:0000250" key="4">
    <source>
        <dbReference type="UniProtKB" id="Q00LS8"/>
    </source>
</evidence>
<evidence type="ECO:0000256" key="5">
    <source>
        <dbReference type="SAM" id="MobiDB-lite"/>
    </source>
</evidence>
<evidence type="ECO:0000269" key="6">
    <source>
    </source>
</evidence>
<evidence type="ECO:0000303" key="7">
    <source>
    </source>
</evidence>
<evidence type="ECO:0000305" key="8"/>
<evidence type="ECO:0000312" key="9">
    <source>
        <dbReference type="Araport" id="AT1G29550"/>
    </source>
</evidence>
<evidence type="ECO:0000312" key="10">
    <source>
        <dbReference type="EMBL" id="AAG51734.1"/>
    </source>
</evidence>
<comment type="function">
    <text evidence="3">Component of the protein complex eIF4F, which is involved in the recognition of the mRNA cap, ATP-dependent unwinding of 5'-terminal secondary structure and recruitment of mRNA to the ribosome (By similarity). Recognizes and binds the 7-methylguanosine-containing mRNA cap during an early step in the initiation of protein synthesis and facilitates ribosome binding by inducing the unwinding of the mRNAs secondary structures (By similarity).</text>
</comment>
<comment type="subunit">
    <text evidence="6">EIF4F is a multi-subunit complex, the composition of which varies with external and internal environmental conditions (PubMed:16343979). It is composed of at least EIF4A, EIF4E and EIF4G (PubMed:16343979). EIF4E is also known to interact with other partners (PubMed:16343979). In higher plants two isoforms of EIF4F have been identified, named isoform EIF4F and isoform EIF(iso)4F (PubMed:16343979). Isoform EIF4F has subunits p220 and p26, whereas isoform EIF(iso)4F has subunits p82 and p28 (PubMed:16343979).</text>
</comment>
<comment type="subcellular location">
    <subcellularLocation>
        <location evidence="1">Nucleus</location>
    </subcellularLocation>
    <subcellularLocation>
        <location evidence="1">Cytoplasm</location>
    </subcellularLocation>
</comment>
<comment type="PTM">
    <text evidence="2">According to the redox status, the Cys-138-Cys-176 disulfide bridge may have a role in regulating protein function by affecting its ability to bind capped mRNA.</text>
</comment>
<comment type="similarity">
    <text evidence="8">Belongs to the eukaryotic initiation factor 4E family.</text>
</comment>
<protein>
    <recommendedName>
        <fullName evidence="7">Eukaryotic translation initiation factor 4E-3</fullName>
    </recommendedName>
    <alternativeName>
        <fullName evidence="7">eIF-4E-3</fullName>
    </alternativeName>
    <alternativeName>
        <fullName evidence="7">eIF4E-3</fullName>
    </alternativeName>
    <alternativeName>
        <fullName evidence="8">mRNA cap-binding protein</fullName>
    </alternativeName>
</protein>
<feature type="chain" id="PRO_0000193656" description="Eukaryotic translation initiation factor 4E-3">
    <location>
        <begin position="1"/>
        <end position="240"/>
    </location>
</feature>
<feature type="region of interest" description="Disordered" evidence="5">
    <location>
        <begin position="1"/>
        <end position="51"/>
    </location>
</feature>
<feature type="region of interest" description="EIF4G-binding" evidence="4">
    <location>
        <begin position="65"/>
        <end position="68"/>
    </location>
</feature>
<feature type="region of interest" description="EIF4G-binding" evidence="4">
    <location>
        <begin position="75"/>
        <end position="111"/>
    </location>
</feature>
<feature type="region of interest" description="EIF4G-binding" evidence="4">
    <location>
        <begin position="159"/>
        <end position="168"/>
    </location>
</feature>
<feature type="compositionally biased region" description="Polar residues" evidence="5">
    <location>
        <begin position="17"/>
        <end position="26"/>
    </location>
</feature>
<feature type="compositionally biased region" description="Basic and acidic residues" evidence="5">
    <location>
        <begin position="39"/>
        <end position="51"/>
    </location>
</feature>
<feature type="binding site" evidence="2">
    <location>
        <begin position="83"/>
        <end position="88"/>
    </location>
    <ligand>
        <name>mRNA</name>
        <dbReference type="ChEBI" id="CHEBI:33699"/>
    </ligand>
    <ligandPart>
        <name>N(7)-methylguanosine 5'-triphosphate group</name>
        <dbReference type="ChEBI" id="CHEBI:74429"/>
        <note>m7GTP residue in mRNA cap</note>
    </ligandPart>
</feature>
<feature type="binding site" evidence="2">
    <location>
        <position position="115"/>
    </location>
    <ligand>
        <name>mRNA</name>
        <dbReference type="ChEBI" id="CHEBI:33699"/>
    </ligand>
    <ligandPart>
        <name>N(7)-methylguanosine 5'-triphosphate group</name>
        <dbReference type="ChEBI" id="CHEBI:74429"/>
        <note>m7GTP residue in mRNA cap</note>
    </ligandPart>
</feature>
<feature type="binding site" evidence="2">
    <location>
        <begin position="133"/>
        <end position="134"/>
    </location>
    <ligand>
        <name>mRNA</name>
        <dbReference type="ChEBI" id="CHEBI:33699"/>
    </ligand>
    <ligandPart>
        <name>N(7)-methylguanosine 5'-triphosphate group</name>
        <dbReference type="ChEBI" id="CHEBI:74429"/>
        <note>m7GTP residue in mRNA cap</note>
    </ligandPart>
</feature>
<feature type="binding site" evidence="2">
    <location>
        <begin position="183"/>
        <end position="188"/>
    </location>
    <ligand>
        <name>mRNA</name>
        <dbReference type="ChEBI" id="CHEBI:33699"/>
    </ligand>
    <ligandPart>
        <name>N(7)-methylguanosine 5'-triphosphate group</name>
        <dbReference type="ChEBI" id="CHEBI:74429"/>
        <note>m7GTP residue in mRNA cap</note>
    </ligandPart>
</feature>
<feature type="binding site" evidence="4">
    <location>
        <begin position="228"/>
        <end position="232"/>
    </location>
    <ligand>
        <name>mRNA</name>
        <dbReference type="ChEBI" id="CHEBI:33699"/>
    </ligand>
    <ligandPart>
        <name>N(7)-methylguanosine 5'-triphosphate group</name>
        <dbReference type="ChEBI" id="CHEBI:74429"/>
        <note>m7GTP residue in mRNA cap</note>
    </ligandPart>
</feature>
<feature type="disulfide bond" evidence="2">
    <location>
        <begin position="138"/>
        <end position="176"/>
    </location>
</feature>
<gene>
    <name evidence="7" type="primary">EIF4E3</name>
    <name evidence="9" type="ordered locus">At1g29550</name>
    <name evidence="10" type="ORF">F15D2.13</name>
</gene>
<dbReference type="EMBL" id="AC068667">
    <property type="protein sequence ID" value="AAG51734.1"/>
    <property type="molecule type" value="Genomic_DNA"/>
</dbReference>
<dbReference type="EMBL" id="CP002684">
    <property type="protein sequence ID" value="AEE31102.1"/>
    <property type="molecule type" value="Genomic_DNA"/>
</dbReference>
<dbReference type="PIR" id="E86418">
    <property type="entry name" value="E86418"/>
</dbReference>
<dbReference type="RefSeq" id="NP_174248.1">
    <property type="nucleotide sequence ID" value="NM_102695.3"/>
</dbReference>
<dbReference type="SMR" id="Q9C7P6"/>
<dbReference type="FunCoup" id="Q9C7P6">
    <property type="interactions" value="3329"/>
</dbReference>
<dbReference type="STRING" id="3702.Q9C7P6"/>
<dbReference type="PaxDb" id="3702-AT1G29550.1"/>
<dbReference type="ProteomicsDB" id="250678"/>
<dbReference type="EnsemblPlants" id="AT1G29550.1">
    <property type="protein sequence ID" value="AT1G29550.1"/>
    <property type="gene ID" value="AT1G29550"/>
</dbReference>
<dbReference type="GeneID" id="839832"/>
<dbReference type="Gramene" id="AT1G29550.1">
    <property type="protein sequence ID" value="AT1G29550.1"/>
    <property type="gene ID" value="AT1G29550"/>
</dbReference>
<dbReference type="KEGG" id="ath:AT1G29550"/>
<dbReference type="Araport" id="AT1G29550"/>
<dbReference type="TAIR" id="AT1G29550">
    <property type="gene designation" value="EIF4E1B"/>
</dbReference>
<dbReference type="eggNOG" id="KOG1670">
    <property type="taxonomic scope" value="Eukaryota"/>
</dbReference>
<dbReference type="HOGENOM" id="CLU_043552_2_1_1"/>
<dbReference type="InParanoid" id="Q9C7P6"/>
<dbReference type="OMA" id="EIYQVEY"/>
<dbReference type="OrthoDB" id="590761at2759"/>
<dbReference type="PhylomeDB" id="Q9C7P6"/>
<dbReference type="PRO" id="PR:Q9C7P6"/>
<dbReference type="Proteomes" id="UP000006548">
    <property type="component" value="Chromosome 1"/>
</dbReference>
<dbReference type="ExpressionAtlas" id="Q9C7P6">
    <property type="expression patterns" value="baseline and differential"/>
</dbReference>
<dbReference type="GO" id="GO:0005737">
    <property type="term" value="C:cytoplasm"/>
    <property type="evidence" value="ECO:0007669"/>
    <property type="project" value="UniProtKB-SubCell"/>
</dbReference>
<dbReference type="GO" id="GO:0005634">
    <property type="term" value="C:nucleus"/>
    <property type="evidence" value="ECO:0007669"/>
    <property type="project" value="UniProtKB-SubCell"/>
</dbReference>
<dbReference type="GO" id="GO:0003723">
    <property type="term" value="F:RNA binding"/>
    <property type="evidence" value="ECO:0007669"/>
    <property type="project" value="UniProtKB-KW"/>
</dbReference>
<dbReference type="GO" id="GO:0003743">
    <property type="term" value="F:translation initiation factor activity"/>
    <property type="evidence" value="ECO:0007669"/>
    <property type="project" value="UniProtKB-KW"/>
</dbReference>
<dbReference type="GO" id="GO:0006417">
    <property type="term" value="P:regulation of translation"/>
    <property type="evidence" value="ECO:0007669"/>
    <property type="project" value="UniProtKB-KW"/>
</dbReference>
<dbReference type="GO" id="GO:0009615">
    <property type="term" value="P:response to virus"/>
    <property type="evidence" value="ECO:0007669"/>
    <property type="project" value="UniProtKB-ARBA"/>
</dbReference>
<dbReference type="FunFam" id="3.30.760.10:FF:000003">
    <property type="entry name" value="Eukaryotic translation initiation factor 4E"/>
    <property type="match status" value="1"/>
</dbReference>
<dbReference type="Gene3D" id="3.30.760.10">
    <property type="entry name" value="RNA Cap, Translation Initiation Factor Eif4e"/>
    <property type="match status" value="1"/>
</dbReference>
<dbReference type="InterPro" id="IPR023398">
    <property type="entry name" value="TIF_eIF4e-like"/>
</dbReference>
<dbReference type="InterPro" id="IPR001040">
    <property type="entry name" value="TIF_eIF_4E"/>
</dbReference>
<dbReference type="InterPro" id="IPR019770">
    <property type="entry name" value="TIF_eIF_4E_CS"/>
</dbReference>
<dbReference type="PANTHER" id="PTHR11960">
    <property type="entry name" value="EUKARYOTIC TRANSLATION INITIATION FACTOR 4E RELATED"/>
    <property type="match status" value="1"/>
</dbReference>
<dbReference type="PANTHER" id="PTHR11960:SF44">
    <property type="entry name" value="EUKARYOTIC TRANSLATION INITIATION FACTOR 4E-2-RELATED"/>
    <property type="match status" value="1"/>
</dbReference>
<dbReference type="Pfam" id="PF01652">
    <property type="entry name" value="IF4E"/>
    <property type="match status" value="1"/>
</dbReference>
<dbReference type="SUPFAM" id="SSF55418">
    <property type="entry name" value="eIF4e-like"/>
    <property type="match status" value="1"/>
</dbReference>
<dbReference type="PROSITE" id="PS00813">
    <property type="entry name" value="IF4E"/>
    <property type="match status" value="1"/>
</dbReference>
<keyword id="KW-0963">Cytoplasm</keyword>
<keyword id="KW-1015">Disulfide bond</keyword>
<keyword id="KW-0396">Initiation factor</keyword>
<keyword id="KW-0539">Nucleus</keyword>
<keyword id="KW-0648">Protein biosynthesis</keyword>
<keyword id="KW-1185">Reference proteome</keyword>
<keyword id="KW-0694">RNA-binding</keyword>
<keyword id="KW-0810">Translation regulation</keyword>
<proteinExistence type="evidence at protein level"/>
<sequence>MVVTDSPVSGIMADQNIDPNTTTSPSPKEKHVSAIKAISGDEKAPSKEKKNYASKKSTTVIQKSHCFQNSWTFWFDNPSSKSNQVIWGSSLRSLYTFGTIEEFWSLYNNIHPPTKWVSGADLYCFKDKIEPKWEDPICANGGKWSMMFPKATLECNWLNTLLALVGEQFDQGDEICGAVLNFRARGDRISLWTKNAANEEAQLSIGKQWKELLGYNETIGFIVHEDAKTLDRDAKRRYTV</sequence>